<name>DOT2_ARATH</name>
<sequence>MEVEKSKSRHEIREERADYEGSPVREHRDGRRKEKDHRSKDKEKDYDREKIRDKDHRRDKEKERDRKRSRDEDTEKEISRGRDKEREKDKSRDRVKEKDKEKERNRHKDRENERDNEKEKDKDRARVKERASKKSHEDDDETHKAAERYEHSDNRGLNEGGDNVDAASSGKEASALDLQNRILKMREERKKKAEDASDALSWVARSRKIEEKRNAEKQRAQQLSRIFEEQDNLNQGENEDGEDGEHLSGVKVLHGLEKVVEGGAVILTLKDQSVLTDGDVNNEIDMLENVEIGEQKRRNEAYEAAKKKKGIYDDKFNDDPGAEKKMLPQYDEAATDEGIFLDAKGRFTGEAEKKLEELRKRIQGQTTHTFEDLNSSAKVSSDYFSQEEMLKFKKPKKKKQLRKKDKLDLSMLEAEAVASGLGAEDLGSRKDGRRQAMKEEKERIEYEKRSNAYQEAIAKADEASRLLRREQVQPFKRDEDESMVLADDAEDLYKSLEKARRLALIKKEEAGSGPQAVAHLVASSTNQTTDDNTTTGDETQENTVVFTEMGDFVWGLQRENDVRKPESEDVFMEEDVAPKAPVEVKEEHPDGLTEVNDTDMDAAEDSSDTKEITPDENIHEVAVGKGLSGALKLLKDRGTLKEKVEWGGRNMDKKKSKLVGIVDDDGGKESKDKESKDRFKDIRIERTDEFGRTLTPKEAFRLLSHKFHGKGPGKMKEEKRMKQYQEELKLKQMKNSDTPSQSVQRMREAQAQLKTPYLVLSGHVKPGQTSDPQSGFATVEKDVPGSLTPMLGDRKVEHFLGIKRKSEPGNSDTPPKRPKP</sequence>
<accession>Q9LFE0</accession>
<accession>B9DHM8</accession>
<accession>Q9ASS0</accession>
<keyword id="KW-0175">Coiled coil</keyword>
<keyword id="KW-0217">Developmental protein</keyword>
<keyword id="KW-0539">Nucleus</keyword>
<keyword id="KW-0597">Phosphoprotein</keyword>
<keyword id="KW-1185">Reference proteome</keyword>
<protein>
    <recommendedName>
        <fullName evidence="7">SART-1 family protein DOT2</fullName>
    </recommendedName>
    <alternativeName>
        <fullName evidence="5">Protein DEFECTIVELY ORGANIZED TRIBUTARIES 2</fullName>
    </alternativeName>
    <alternativeName>
        <fullName evidence="6">Protein MERISTEM-DEFECTIVE</fullName>
    </alternativeName>
</protein>
<gene>
    <name evidence="5" type="primary">DOT2</name>
    <name evidence="6" type="synonym">MDF</name>
    <name evidence="8" type="ordered locus">At5g16780</name>
    <name evidence="9" type="ORF">F5E19.120</name>
</gene>
<evidence type="ECO:0000255" key="1"/>
<evidence type="ECO:0000256" key="2">
    <source>
        <dbReference type="SAM" id="MobiDB-lite"/>
    </source>
</evidence>
<evidence type="ECO:0000269" key="3">
    <source>
    </source>
</evidence>
<evidence type="ECO:0000269" key="4">
    <source>
    </source>
</evidence>
<evidence type="ECO:0000303" key="5">
    <source>
    </source>
</evidence>
<evidence type="ECO:0000303" key="6">
    <source>
    </source>
</evidence>
<evidence type="ECO:0000305" key="7"/>
<evidence type="ECO:0000312" key="8">
    <source>
        <dbReference type="Araport" id="AT5G16780"/>
    </source>
</evidence>
<evidence type="ECO:0000312" key="9">
    <source>
        <dbReference type="EMBL" id="CAC01842.1"/>
    </source>
</evidence>
<evidence type="ECO:0007744" key="10">
    <source>
    </source>
</evidence>
<reference key="1">
    <citation type="journal article" date="2000" name="Nature">
        <title>Sequence and analysis of chromosome 5 of the plant Arabidopsis thaliana.</title>
        <authorList>
            <person name="Tabata S."/>
            <person name="Kaneko T."/>
            <person name="Nakamura Y."/>
            <person name="Kotani H."/>
            <person name="Kato T."/>
            <person name="Asamizu E."/>
            <person name="Miyajima N."/>
            <person name="Sasamoto S."/>
            <person name="Kimura T."/>
            <person name="Hosouchi T."/>
            <person name="Kawashima K."/>
            <person name="Kohara M."/>
            <person name="Matsumoto M."/>
            <person name="Matsuno A."/>
            <person name="Muraki A."/>
            <person name="Nakayama S."/>
            <person name="Nakazaki N."/>
            <person name="Naruo K."/>
            <person name="Okumura S."/>
            <person name="Shinpo S."/>
            <person name="Takeuchi C."/>
            <person name="Wada T."/>
            <person name="Watanabe A."/>
            <person name="Yamada M."/>
            <person name="Yasuda M."/>
            <person name="Sato S."/>
            <person name="de la Bastide M."/>
            <person name="Huang E."/>
            <person name="Spiegel L."/>
            <person name="Gnoj L."/>
            <person name="O'Shaughnessy A."/>
            <person name="Preston R."/>
            <person name="Habermann K."/>
            <person name="Murray J."/>
            <person name="Johnson D."/>
            <person name="Rohlfing T."/>
            <person name="Nelson J."/>
            <person name="Stoneking T."/>
            <person name="Pepin K."/>
            <person name="Spieth J."/>
            <person name="Sekhon M."/>
            <person name="Armstrong J."/>
            <person name="Becker M."/>
            <person name="Belter E."/>
            <person name="Cordum H."/>
            <person name="Cordes M."/>
            <person name="Courtney L."/>
            <person name="Courtney W."/>
            <person name="Dante M."/>
            <person name="Du H."/>
            <person name="Edwards J."/>
            <person name="Fryman J."/>
            <person name="Haakensen B."/>
            <person name="Lamar E."/>
            <person name="Latreille P."/>
            <person name="Leonard S."/>
            <person name="Meyer R."/>
            <person name="Mulvaney E."/>
            <person name="Ozersky P."/>
            <person name="Riley A."/>
            <person name="Strowmatt C."/>
            <person name="Wagner-McPherson C."/>
            <person name="Wollam A."/>
            <person name="Yoakum M."/>
            <person name="Bell M."/>
            <person name="Dedhia N."/>
            <person name="Parnell L."/>
            <person name="Shah R."/>
            <person name="Rodriguez M."/>
            <person name="Hoon See L."/>
            <person name="Vil D."/>
            <person name="Baker J."/>
            <person name="Kirchoff K."/>
            <person name="Toth K."/>
            <person name="King L."/>
            <person name="Bahret A."/>
            <person name="Miller B."/>
            <person name="Marra M.A."/>
            <person name="Martienssen R."/>
            <person name="McCombie W.R."/>
            <person name="Wilson R.K."/>
            <person name="Murphy G."/>
            <person name="Bancroft I."/>
            <person name="Volckaert G."/>
            <person name="Wambutt R."/>
            <person name="Duesterhoeft A."/>
            <person name="Stiekema W."/>
            <person name="Pohl T."/>
            <person name="Entian K.-D."/>
            <person name="Terryn N."/>
            <person name="Hartley N."/>
            <person name="Bent E."/>
            <person name="Johnson S."/>
            <person name="Langham S.-A."/>
            <person name="McCullagh B."/>
            <person name="Robben J."/>
            <person name="Grymonprez B."/>
            <person name="Zimmermann W."/>
            <person name="Ramsperger U."/>
            <person name="Wedler H."/>
            <person name="Balke K."/>
            <person name="Wedler E."/>
            <person name="Peters S."/>
            <person name="van Staveren M."/>
            <person name="Dirkse W."/>
            <person name="Mooijman P."/>
            <person name="Klein Lankhorst R."/>
            <person name="Weitzenegger T."/>
            <person name="Bothe G."/>
            <person name="Rose M."/>
            <person name="Hauf J."/>
            <person name="Berneiser S."/>
            <person name="Hempel S."/>
            <person name="Feldpausch M."/>
            <person name="Lamberth S."/>
            <person name="Villarroel R."/>
            <person name="Gielen J."/>
            <person name="Ardiles W."/>
            <person name="Bents O."/>
            <person name="Lemcke K."/>
            <person name="Kolesov G."/>
            <person name="Mayer K.F.X."/>
            <person name="Rudd S."/>
            <person name="Schoof H."/>
            <person name="Schueller C."/>
            <person name="Zaccaria P."/>
            <person name="Mewes H.-W."/>
            <person name="Bevan M."/>
            <person name="Fransz P.F."/>
        </authorList>
    </citation>
    <scope>NUCLEOTIDE SEQUENCE [LARGE SCALE GENOMIC DNA]</scope>
    <source>
        <strain>cv. Columbia</strain>
    </source>
</reference>
<reference key="2">
    <citation type="journal article" date="2017" name="Plant J.">
        <title>Araport11: a complete reannotation of the Arabidopsis thaliana reference genome.</title>
        <authorList>
            <person name="Cheng C.Y."/>
            <person name="Krishnakumar V."/>
            <person name="Chan A.P."/>
            <person name="Thibaud-Nissen F."/>
            <person name="Schobel S."/>
            <person name="Town C.D."/>
        </authorList>
    </citation>
    <scope>GENOME REANNOTATION</scope>
    <source>
        <strain>cv. Columbia</strain>
    </source>
</reference>
<reference key="3">
    <citation type="journal article" date="2003" name="Science">
        <title>Empirical analysis of transcriptional activity in the Arabidopsis genome.</title>
        <authorList>
            <person name="Yamada K."/>
            <person name="Lim J."/>
            <person name="Dale J.M."/>
            <person name="Chen H."/>
            <person name="Shinn P."/>
            <person name="Palm C.J."/>
            <person name="Southwick A.M."/>
            <person name="Wu H.C."/>
            <person name="Kim C.J."/>
            <person name="Nguyen M."/>
            <person name="Pham P.K."/>
            <person name="Cheuk R.F."/>
            <person name="Karlin-Newmann G."/>
            <person name="Liu S.X."/>
            <person name="Lam B."/>
            <person name="Sakano H."/>
            <person name="Wu T."/>
            <person name="Yu G."/>
            <person name="Miranda M."/>
            <person name="Quach H.L."/>
            <person name="Tripp M."/>
            <person name="Chang C.H."/>
            <person name="Lee J.M."/>
            <person name="Toriumi M.J."/>
            <person name="Chan M.M."/>
            <person name="Tang C.C."/>
            <person name="Onodera C.S."/>
            <person name="Deng J.M."/>
            <person name="Akiyama K."/>
            <person name="Ansari Y."/>
            <person name="Arakawa T."/>
            <person name="Banh J."/>
            <person name="Banno F."/>
            <person name="Bowser L."/>
            <person name="Brooks S.Y."/>
            <person name="Carninci P."/>
            <person name="Chao Q."/>
            <person name="Choy N."/>
            <person name="Enju A."/>
            <person name="Goldsmith A.D."/>
            <person name="Gurjal M."/>
            <person name="Hansen N.F."/>
            <person name="Hayashizaki Y."/>
            <person name="Johnson-Hopson C."/>
            <person name="Hsuan V.W."/>
            <person name="Iida K."/>
            <person name="Karnes M."/>
            <person name="Khan S."/>
            <person name="Koesema E."/>
            <person name="Ishida J."/>
            <person name="Jiang P.X."/>
            <person name="Jones T."/>
            <person name="Kawai J."/>
            <person name="Kamiya A."/>
            <person name="Meyers C."/>
            <person name="Nakajima M."/>
            <person name="Narusaka M."/>
            <person name="Seki M."/>
            <person name="Sakurai T."/>
            <person name="Satou M."/>
            <person name="Tamse R."/>
            <person name="Vaysberg M."/>
            <person name="Wallender E.K."/>
            <person name="Wong C."/>
            <person name="Yamamura Y."/>
            <person name="Yuan S."/>
            <person name="Shinozaki K."/>
            <person name="Davis R.W."/>
            <person name="Theologis A."/>
            <person name="Ecker J.R."/>
        </authorList>
    </citation>
    <scope>NUCLEOTIDE SEQUENCE [LARGE SCALE MRNA] OF 1-652</scope>
    <source>
        <strain>cv. Columbia</strain>
    </source>
</reference>
<reference key="4">
    <citation type="journal article" date="2009" name="DNA Res.">
        <title>Analysis of multiple occurrences of alternative splicing events in Arabidopsis thaliana using novel sequenced full-length cDNAs.</title>
        <authorList>
            <person name="Iida K."/>
            <person name="Fukami-Kobayashi K."/>
            <person name="Toyoda A."/>
            <person name="Sakaki Y."/>
            <person name="Kobayashi M."/>
            <person name="Seki M."/>
            <person name="Shinozaki K."/>
        </authorList>
    </citation>
    <scope>NUCLEOTIDE SEQUENCE [LARGE SCALE MRNA] OF 22-820</scope>
    <source>
        <strain>cv. Columbia</strain>
    </source>
</reference>
<reference key="5">
    <citation type="journal article" date="2008" name="Plant J.">
        <title>Vein patterning screens and the defectively organized tributaries mutants in Arabidopsis thaliana.</title>
        <authorList>
            <person name="Petricka J.J."/>
            <person name="Clay N.K."/>
            <person name="Nelson T.M."/>
        </authorList>
    </citation>
    <scope>FUNCTION</scope>
    <scope>TISSUE SPECIFICITY</scope>
    <scope>DISRUPTION PHENOTYPE</scope>
</reference>
<reference key="6">
    <citation type="journal article" date="2009" name="Plant J.">
        <title>MERISTEM-DEFECTIVE, an RS domain protein, is required for the correct meristem patterning and function in Arabidopsis.</title>
        <authorList>
            <person name="Casson S.A."/>
            <person name="Topping J.F."/>
            <person name="Lindsey K."/>
        </authorList>
    </citation>
    <scope>FUNCTION</scope>
    <scope>SUBCELLULAR LOCATION</scope>
    <scope>TISSUE SPECIFICITY</scope>
    <scope>DISRUPTION PHENOTYPE</scope>
</reference>
<reference key="7">
    <citation type="journal article" date="2009" name="Plant Physiol.">
        <title>Large-scale Arabidopsis phosphoproteome profiling reveals novel chloroplast kinase substrates and phosphorylation networks.</title>
        <authorList>
            <person name="Reiland S."/>
            <person name="Messerli G."/>
            <person name="Baerenfaller K."/>
            <person name="Gerrits B."/>
            <person name="Endler A."/>
            <person name="Grossmann J."/>
            <person name="Gruissem W."/>
            <person name="Baginsky S."/>
        </authorList>
    </citation>
    <scope>PHOSPHORYLATION [LARGE SCALE ANALYSIS] AT SER-22</scope>
    <scope>IDENTIFICATION BY MASS SPECTROMETRY [LARGE SCALE ANALYSIS]</scope>
</reference>
<dbReference type="EMBL" id="AL391147">
    <property type="protein sequence ID" value="CAC01842.1"/>
    <property type="molecule type" value="Genomic_DNA"/>
</dbReference>
<dbReference type="EMBL" id="CP002688">
    <property type="protein sequence ID" value="AED92337.1"/>
    <property type="molecule type" value="Genomic_DNA"/>
</dbReference>
<dbReference type="EMBL" id="CP002688">
    <property type="protein sequence ID" value="ANM68274.1"/>
    <property type="molecule type" value="Genomic_DNA"/>
</dbReference>
<dbReference type="EMBL" id="CP002688">
    <property type="protein sequence ID" value="ANM68275.1"/>
    <property type="molecule type" value="Genomic_DNA"/>
</dbReference>
<dbReference type="EMBL" id="AF367317">
    <property type="protein sequence ID" value="AAK32904.1"/>
    <property type="molecule type" value="mRNA"/>
</dbReference>
<dbReference type="EMBL" id="AK317581">
    <property type="protein sequence ID" value="BAH20245.1"/>
    <property type="molecule type" value="mRNA"/>
</dbReference>
<dbReference type="PIR" id="T51510">
    <property type="entry name" value="T51510"/>
</dbReference>
<dbReference type="RefSeq" id="NP_001318573.1">
    <property type="nucleotide sequence ID" value="NM_001343464.1"/>
</dbReference>
<dbReference type="RefSeq" id="NP_001330040.1">
    <property type="nucleotide sequence ID" value="NM_001343465.1"/>
</dbReference>
<dbReference type="RefSeq" id="NP_197180.1">
    <property type="nucleotide sequence ID" value="NM_121684.4"/>
</dbReference>
<dbReference type="SMR" id="Q9LFE0"/>
<dbReference type="BioGRID" id="16817">
    <property type="interactions" value="1"/>
</dbReference>
<dbReference type="FunCoup" id="Q9LFE0">
    <property type="interactions" value="4459"/>
</dbReference>
<dbReference type="IntAct" id="Q9LFE0">
    <property type="interactions" value="1"/>
</dbReference>
<dbReference type="STRING" id="3702.Q9LFE0"/>
<dbReference type="iPTMnet" id="Q9LFE0"/>
<dbReference type="PaxDb" id="3702-AT5G16780.1"/>
<dbReference type="ProteomicsDB" id="222138"/>
<dbReference type="EnsemblPlants" id="AT5G16780.1">
    <property type="protein sequence ID" value="AT5G16780.1"/>
    <property type="gene ID" value="AT5G16780"/>
</dbReference>
<dbReference type="EnsemblPlants" id="AT5G16780.2">
    <property type="protein sequence ID" value="AT5G16780.2"/>
    <property type="gene ID" value="AT5G16780"/>
</dbReference>
<dbReference type="EnsemblPlants" id="AT5G16780.3">
    <property type="protein sequence ID" value="AT5G16780.3"/>
    <property type="gene ID" value="AT5G16780"/>
</dbReference>
<dbReference type="GeneID" id="831541"/>
<dbReference type="Gramene" id="AT5G16780.1">
    <property type="protein sequence ID" value="AT5G16780.1"/>
    <property type="gene ID" value="AT5G16780"/>
</dbReference>
<dbReference type="Gramene" id="AT5G16780.2">
    <property type="protein sequence ID" value="AT5G16780.2"/>
    <property type="gene ID" value="AT5G16780"/>
</dbReference>
<dbReference type="Gramene" id="AT5G16780.3">
    <property type="protein sequence ID" value="AT5G16780.3"/>
    <property type="gene ID" value="AT5G16780"/>
</dbReference>
<dbReference type="KEGG" id="ath:AT5G16780"/>
<dbReference type="Araport" id="AT5G16780"/>
<dbReference type="TAIR" id="AT5G16780">
    <property type="gene designation" value="DOT2"/>
</dbReference>
<dbReference type="eggNOG" id="KOG2217">
    <property type="taxonomic scope" value="Eukaryota"/>
</dbReference>
<dbReference type="HOGENOM" id="CLU_009379_0_0_1"/>
<dbReference type="InParanoid" id="Q9LFE0"/>
<dbReference type="OMA" id="KRRDYTG"/>
<dbReference type="OrthoDB" id="5583at2759"/>
<dbReference type="PhylomeDB" id="Q9LFE0"/>
<dbReference type="CD-CODE" id="4299E36E">
    <property type="entry name" value="Nucleolus"/>
</dbReference>
<dbReference type="PRO" id="PR:Q9LFE0"/>
<dbReference type="Proteomes" id="UP000006548">
    <property type="component" value="Chromosome 5"/>
</dbReference>
<dbReference type="ExpressionAtlas" id="Q9LFE0">
    <property type="expression patterns" value="baseline and differential"/>
</dbReference>
<dbReference type="GO" id="GO:0005730">
    <property type="term" value="C:nucleolus"/>
    <property type="evidence" value="ECO:0007005"/>
    <property type="project" value="TAIR"/>
</dbReference>
<dbReference type="GO" id="GO:0005634">
    <property type="term" value="C:nucleus"/>
    <property type="evidence" value="ECO:0000314"/>
    <property type="project" value="TAIR"/>
</dbReference>
<dbReference type="GO" id="GO:0010588">
    <property type="term" value="P:cotyledon vascular tissue pattern formation"/>
    <property type="evidence" value="ECO:0000315"/>
    <property type="project" value="TAIR"/>
</dbReference>
<dbReference type="GO" id="GO:0009908">
    <property type="term" value="P:flower development"/>
    <property type="evidence" value="ECO:0000315"/>
    <property type="project" value="TAIR"/>
</dbReference>
<dbReference type="GO" id="GO:0048366">
    <property type="term" value="P:leaf development"/>
    <property type="evidence" value="ECO:0000315"/>
    <property type="project" value="TAIR"/>
</dbReference>
<dbReference type="GO" id="GO:0010305">
    <property type="term" value="P:leaf vascular tissue pattern formation"/>
    <property type="evidence" value="ECO:0000315"/>
    <property type="project" value="TAIR"/>
</dbReference>
<dbReference type="GO" id="GO:0009933">
    <property type="term" value="P:meristem structural organization"/>
    <property type="evidence" value="ECO:0000315"/>
    <property type="project" value="TAIR"/>
</dbReference>
<dbReference type="GO" id="GO:0000398">
    <property type="term" value="P:mRNA splicing, via spliceosome"/>
    <property type="evidence" value="ECO:0007669"/>
    <property type="project" value="InterPro"/>
</dbReference>
<dbReference type="GO" id="GO:0010087">
    <property type="term" value="P:phloem or xylem histogenesis"/>
    <property type="evidence" value="ECO:0000315"/>
    <property type="project" value="TAIR"/>
</dbReference>
<dbReference type="GO" id="GO:0048528">
    <property type="term" value="P:post-embryonic root development"/>
    <property type="evidence" value="ECO:0000315"/>
    <property type="project" value="TAIR"/>
</dbReference>
<dbReference type="GO" id="GO:0048364">
    <property type="term" value="P:root development"/>
    <property type="evidence" value="ECO:0000315"/>
    <property type="project" value="TAIR"/>
</dbReference>
<dbReference type="GO" id="GO:0048367">
    <property type="term" value="P:shoot system development"/>
    <property type="evidence" value="ECO:0000315"/>
    <property type="project" value="TAIR"/>
</dbReference>
<dbReference type="InterPro" id="IPR005011">
    <property type="entry name" value="SNU66/SART1"/>
</dbReference>
<dbReference type="PANTHER" id="PTHR14152">
    <property type="entry name" value="SQUAMOUS CELL CARCINOMA ANTIGEN RECOGNISED BY CYTOTOXIC T LYMPHOCYTES"/>
    <property type="match status" value="1"/>
</dbReference>
<dbReference type="PANTHER" id="PTHR14152:SF5">
    <property type="entry name" value="U4_U6.U5 TRI-SNRNP-ASSOCIATED PROTEIN 1"/>
    <property type="match status" value="1"/>
</dbReference>
<dbReference type="Pfam" id="PF03343">
    <property type="entry name" value="SART-1"/>
    <property type="match status" value="2"/>
</dbReference>
<proteinExistence type="evidence at protein level"/>
<organism>
    <name type="scientific">Arabidopsis thaliana</name>
    <name type="common">Mouse-ear cress</name>
    <dbReference type="NCBI Taxonomy" id="3702"/>
    <lineage>
        <taxon>Eukaryota</taxon>
        <taxon>Viridiplantae</taxon>
        <taxon>Streptophyta</taxon>
        <taxon>Embryophyta</taxon>
        <taxon>Tracheophyta</taxon>
        <taxon>Spermatophyta</taxon>
        <taxon>Magnoliopsida</taxon>
        <taxon>eudicotyledons</taxon>
        <taxon>Gunneridae</taxon>
        <taxon>Pentapetalae</taxon>
        <taxon>rosids</taxon>
        <taxon>malvids</taxon>
        <taxon>Brassicales</taxon>
        <taxon>Brassicaceae</taxon>
        <taxon>Camelineae</taxon>
        <taxon>Arabidopsis</taxon>
    </lineage>
</organism>
<feature type="chain" id="PRO_0000431315" description="SART-1 family protein DOT2">
    <location>
        <begin position="1"/>
        <end position="820"/>
    </location>
</feature>
<feature type="region of interest" description="Disordered" evidence="2">
    <location>
        <begin position="1"/>
        <end position="177"/>
    </location>
</feature>
<feature type="region of interest" description="Disordered" evidence="2">
    <location>
        <begin position="210"/>
        <end position="248"/>
    </location>
</feature>
<feature type="region of interest" description="Disordered" evidence="2">
    <location>
        <begin position="420"/>
        <end position="445"/>
    </location>
</feature>
<feature type="region of interest" description="Disordered" evidence="2">
    <location>
        <begin position="523"/>
        <end position="544"/>
    </location>
</feature>
<feature type="region of interest" description="Disordered" evidence="2">
    <location>
        <begin position="564"/>
        <end position="617"/>
    </location>
</feature>
<feature type="region of interest" description="Disordered" evidence="2">
    <location>
        <begin position="657"/>
        <end position="678"/>
    </location>
</feature>
<feature type="region of interest" description="Disordered" evidence="2">
    <location>
        <begin position="729"/>
        <end position="748"/>
    </location>
</feature>
<feature type="region of interest" description="Disordered" evidence="2">
    <location>
        <begin position="762"/>
        <end position="820"/>
    </location>
</feature>
<feature type="coiled-coil region" evidence="1">
    <location>
        <begin position="58"/>
        <end position="120"/>
    </location>
</feature>
<feature type="coiled-coil region" evidence="1">
    <location>
        <begin position="171"/>
        <end position="235"/>
    </location>
</feature>
<feature type="coiled-coil region" evidence="1">
    <location>
        <begin position="433"/>
        <end position="510"/>
    </location>
</feature>
<feature type="compositionally biased region" description="Basic and acidic residues" evidence="2">
    <location>
        <begin position="1"/>
        <end position="156"/>
    </location>
</feature>
<feature type="compositionally biased region" description="Basic and acidic residues" evidence="2">
    <location>
        <begin position="210"/>
        <end position="219"/>
    </location>
</feature>
<feature type="compositionally biased region" description="Basic and acidic residues" evidence="2">
    <location>
        <begin position="426"/>
        <end position="445"/>
    </location>
</feature>
<feature type="compositionally biased region" description="Low complexity" evidence="2">
    <location>
        <begin position="525"/>
        <end position="543"/>
    </location>
</feature>
<feature type="compositionally biased region" description="Basic and acidic residues" evidence="2">
    <location>
        <begin position="582"/>
        <end position="591"/>
    </location>
</feature>
<feature type="compositionally biased region" description="Acidic residues" evidence="2">
    <location>
        <begin position="596"/>
        <end position="606"/>
    </location>
</feature>
<feature type="compositionally biased region" description="Basic and acidic residues" evidence="2">
    <location>
        <begin position="607"/>
        <end position="617"/>
    </location>
</feature>
<feature type="compositionally biased region" description="Basic and acidic residues" evidence="2">
    <location>
        <begin position="665"/>
        <end position="678"/>
    </location>
</feature>
<feature type="compositionally biased region" description="Polar residues" evidence="2">
    <location>
        <begin position="733"/>
        <end position="744"/>
    </location>
</feature>
<feature type="compositionally biased region" description="Polar residues" evidence="2">
    <location>
        <begin position="767"/>
        <end position="776"/>
    </location>
</feature>
<feature type="compositionally biased region" description="Basic and acidic residues" evidence="2">
    <location>
        <begin position="792"/>
        <end position="807"/>
    </location>
</feature>
<feature type="modified residue" description="Phosphoserine" evidence="10">
    <location>
        <position position="22"/>
    </location>
</feature>
<comment type="function">
    <text evidence="3 4">Plays a role in root, shoot and flower development. Probably required for normal root and shoot meristem organization and maintenance and the proper expression of PIN and PLT genes (PubMed:19000164). Involved in leaf vasculature patterning (PubMed:18643975).</text>
</comment>
<comment type="subcellular location">
    <subcellularLocation>
        <location evidence="4">Nucleus</location>
    </subcellularLocation>
</comment>
<comment type="tissue specificity">
    <text evidence="3 4">Expressed in lateral root cap, columella, meristem and quiescent center (QC) (PubMed:19000164). Expressed in young leaves (PubMed:18643975).</text>
</comment>
<comment type="disruption phenotype">
    <text evidence="3 4">Dwarf plants with variable number of cotyledons, short petioles in leaves and impaired flowering (PubMed:18643975, PubMed:19000164). Defects in venation pattern in leaves (PubMed:18643975).</text>
</comment>
<comment type="similarity">
    <text evidence="7">Belongs to the SNU66/SART1 family.</text>
</comment>